<organism>
    <name type="scientific">Streptococcus pyogenes serotype M4 (strain MGAS10750)</name>
    <dbReference type="NCBI Taxonomy" id="370554"/>
    <lineage>
        <taxon>Bacteria</taxon>
        <taxon>Bacillati</taxon>
        <taxon>Bacillota</taxon>
        <taxon>Bacilli</taxon>
        <taxon>Lactobacillales</taxon>
        <taxon>Streptococcaceae</taxon>
        <taxon>Streptococcus</taxon>
    </lineage>
</organism>
<sequence length="185" mass="20440">MIEASKLKAGMTFEAEGKLIRVLEASHHKPGKGNTIMRMKLRDVRTGSTFDTTYRPDETFEQAIIETVPAQYLYKMDDTAYFMNTDTYDQYEIPVANVEQELLYILENSDVKIQFYGSEVIGVTVPTTVELTVAETQPSIKGATVTGSGKPATLETGLVVNVPDFIEAGQKLIINTAEGTYVSRA</sequence>
<reference key="1">
    <citation type="journal article" date="2006" name="Proc. Natl. Acad. Sci. U.S.A.">
        <title>Molecular genetic anatomy of inter- and intraserotype variation in the human bacterial pathogen group A Streptococcus.</title>
        <authorList>
            <person name="Beres S.B."/>
            <person name="Richter E.W."/>
            <person name="Nagiec M.J."/>
            <person name="Sumby P."/>
            <person name="Porcella S.F."/>
            <person name="DeLeo F.R."/>
            <person name="Musser J.M."/>
        </authorList>
    </citation>
    <scope>NUCLEOTIDE SEQUENCE [LARGE SCALE GENOMIC DNA]</scope>
    <source>
        <strain>MGAS10750</strain>
    </source>
</reference>
<accession>Q1J530</accession>
<proteinExistence type="inferred from homology"/>
<protein>
    <recommendedName>
        <fullName evidence="1">Elongation factor P</fullName>
        <shortName evidence="1">EF-P</shortName>
    </recommendedName>
</protein>
<keyword id="KW-0963">Cytoplasm</keyword>
<keyword id="KW-0251">Elongation factor</keyword>
<keyword id="KW-0648">Protein biosynthesis</keyword>
<comment type="function">
    <text evidence="1">Involved in peptide bond synthesis. Stimulates efficient translation and peptide-bond synthesis on native or reconstituted 70S ribosomes in vitro. Probably functions indirectly by altering the affinity of the ribosome for aminoacyl-tRNA, thus increasing their reactivity as acceptors for peptidyl transferase.</text>
</comment>
<comment type="pathway">
    <text evidence="1">Protein biosynthesis; polypeptide chain elongation.</text>
</comment>
<comment type="subcellular location">
    <subcellularLocation>
        <location evidence="1">Cytoplasm</location>
    </subcellularLocation>
</comment>
<comment type="similarity">
    <text evidence="1">Belongs to the elongation factor P family.</text>
</comment>
<name>EFP_STRPF</name>
<dbReference type="EMBL" id="CP000262">
    <property type="protein sequence ID" value="ABF38556.1"/>
    <property type="molecule type" value="Genomic_DNA"/>
</dbReference>
<dbReference type="SMR" id="Q1J530"/>
<dbReference type="KEGG" id="spi:MGAS10750_Spy1606"/>
<dbReference type="HOGENOM" id="CLU_074944_3_0_9"/>
<dbReference type="UniPathway" id="UPA00345"/>
<dbReference type="Proteomes" id="UP000002434">
    <property type="component" value="Chromosome"/>
</dbReference>
<dbReference type="GO" id="GO:0005737">
    <property type="term" value="C:cytoplasm"/>
    <property type="evidence" value="ECO:0007669"/>
    <property type="project" value="UniProtKB-SubCell"/>
</dbReference>
<dbReference type="GO" id="GO:0003746">
    <property type="term" value="F:translation elongation factor activity"/>
    <property type="evidence" value="ECO:0007669"/>
    <property type="project" value="UniProtKB-UniRule"/>
</dbReference>
<dbReference type="GO" id="GO:0043043">
    <property type="term" value="P:peptide biosynthetic process"/>
    <property type="evidence" value="ECO:0007669"/>
    <property type="project" value="InterPro"/>
</dbReference>
<dbReference type="CDD" id="cd04470">
    <property type="entry name" value="S1_EF-P_repeat_1"/>
    <property type="match status" value="1"/>
</dbReference>
<dbReference type="CDD" id="cd05794">
    <property type="entry name" value="S1_EF-P_repeat_2"/>
    <property type="match status" value="1"/>
</dbReference>
<dbReference type="FunFam" id="2.30.30.30:FF:000003">
    <property type="entry name" value="Elongation factor P"/>
    <property type="match status" value="1"/>
</dbReference>
<dbReference type="FunFam" id="2.40.50.140:FF:000004">
    <property type="entry name" value="Elongation factor P"/>
    <property type="match status" value="1"/>
</dbReference>
<dbReference type="FunFam" id="2.40.50.140:FF:000009">
    <property type="entry name" value="Elongation factor P"/>
    <property type="match status" value="1"/>
</dbReference>
<dbReference type="Gene3D" id="2.30.30.30">
    <property type="match status" value="1"/>
</dbReference>
<dbReference type="Gene3D" id="2.40.50.140">
    <property type="entry name" value="Nucleic acid-binding proteins"/>
    <property type="match status" value="2"/>
</dbReference>
<dbReference type="HAMAP" id="MF_00141">
    <property type="entry name" value="EF_P"/>
    <property type="match status" value="1"/>
</dbReference>
<dbReference type="InterPro" id="IPR015365">
    <property type="entry name" value="Elong-fact-P_C"/>
</dbReference>
<dbReference type="InterPro" id="IPR012340">
    <property type="entry name" value="NA-bd_OB-fold"/>
</dbReference>
<dbReference type="InterPro" id="IPR014722">
    <property type="entry name" value="Rib_uL2_dom2"/>
</dbReference>
<dbReference type="InterPro" id="IPR020599">
    <property type="entry name" value="Transl_elong_fac_P/YeiP"/>
</dbReference>
<dbReference type="InterPro" id="IPR013185">
    <property type="entry name" value="Transl_elong_KOW-like"/>
</dbReference>
<dbReference type="InterPro" id="IPR001059">
    <property type="entry name" value="Transl_elong_P/YeiP_cen"/>
</dbReference>
<dbReference type="InterPro" id="IPR013852">
    <property type="entry name" value="Transl_elong_P/YeiP_CS"/>
</dbReference>
<dbReference type="InterPro" id="IPR011768">
    <property type="entry name" value="Transl_elongation_fac_P"/>
</dbReference>
<dbReference type="InterPro" id="IPR008991">
    <property type="entry name" value="Translation_prot_SH3-like_sf"/>
</dbReference>
<dbReference type="NCBIfam" id="TIGR00038">
    <property type="entry name" value="efp"/>
    <property type="match status" value="1"/>
</dbReference>
<dbReference type="NCBIfam" id="NF001810">
    <property type="entry name" value="PRK00529.1"/>
    <property type="match status" value="1"/>
</dbReference>
<dbReference type="PANTHER" id="PTHR30053">
    <property type="entry name" value="ELONGATION FACTOR P"/>
    <property type="match status" value="1"/>
</dbReference>
<dbReference type="PANTHER" id="PTHR30053:SF12">
    <property type="entry name" value="ELONGATION FACTOR P (EF-P) FAMILY PROTEIN"/>
    <property type="match status" value="1"/>
</dbReference>
<dbReference type="Pfam" id="PF01132">
    <property type="entry name" value="EFP"/>
    <property type="match status" value="1"/>
</dbReference>
<dbReference type="Pfam" id="PF08207">
    <property type="entry name" value="EFP_N"/>
    <property type="match status" value="1"/>
</dbReference>
<dbReference type="Pfam" id="PF09285">
    <property type="entry name" value="Elong-fact-P_C"/>
    <property type="match status" value="1"/>
</dbReference>
<dbReference type="PIRSF" id="PIRSF005901">
    <property type="entry name" value="EF-P"/>
    <property type="match status" value="1"/>
</dbReference>
<dbReference type="SMART" id="SM01185">
    <property type="entry name" value="EFP"/>
    <property type="match status" value="1"/>
</dbReference>
<dbReference type="SMART" id="SM00841">
    <property type="entry name" value="Elong-fact-P_C"/>
    <property type="match status" value="1"/>
</dbReference>
<dbReference type="SUPFAM" id="SSF50249">
    <property type="entry name" value="Nucleic acid-binding proteins"/>
    <property type="match status" value="2"/>
</dbReference>
<dbReference type="SUPFAM" id="SSF50104">
    <property type="entry name" value="Translation proteins SH3-like domain"/>
    <property type="match status" value="1"/>
</dbReference>
<dbReference type="PROSITE" id="PS01275">
    <property type="entry name" value="EFP"/>
    <property type="match status" value="1"/>
</dbReference>
<feature type="chain" id="PRO_1000010875" description="Elongation factor P">
    <location>
        <begin position="1"/>
        <end position="185"/>
    </location>
</feature>
<gene>
    <name evidence="1" type="primary">efp</name>
    <name type="ordered locus">MGAS10750_Spy1606</name>
</gene>
<evidence type="ECO:0000255" key="1">
    <source>
        <dbReference type="HAMAP-Rule" id="MF_00141"/>
    </source>
</evidence>